<feature type="chain" id="PRO_0000236140" description="DNA replication and repair protein RecF">
    <location>
        <begin position="1"/>
        <end position="412"/>
    </location>
</feature>
<feature type="region of interest" description="Disordered" evidence="2">
    <location>
        <begin position="369"/>
        <end position="412"/>
    </location>
</feature>
<feature type="compositionally biased region" description="Low complexity" evidence="2">
    <location>
        <begin position="389"/>
        <end position="412"/>
    </location>
</feature>
<feature type="binding site" evidence="1">
    <location>
        <begin position="30"/>
        <end position="37"/>
    </location>
    <ligand>
        <name>ATP</name>
        <dbReference type="ChEBI" id="CHEBI:30616"/>
    </ligand>
</feature>
<comment type="function">
    <text evidence="1">The RecF protein is involved in DNA metabolism; it is required for DNA replication and normal SOS inducibility. RecF binds preferentially to single-stranded, linear DNA. It also seems to bind ATP.</text>
</comment>
<comment type="subcellular location">
    <subcellularLocation>
        <location evidence="1">Cytoplasm</location>
    </subcellularLocation>
</comment>
<comment type="similarity">
    <text evidence="1">Belongs to the RecF family.</text>
</comment>
<reference key="1">
    <citation type="journal article" date="2005" name="Proc. Natl. Acad. Sci. U.S.A.">
        <title>The genome of Salinibacter ruber: convergence and gene exchange among hyperhalophilic bacteria and archaea.</title>
        <authorList>
            <person name="Mongodin E.F."/>
            <person name="Nelson K.E."/>
            <person name="Daugherty S."/>
            <person name="DeBoy R.T."/>
            <person name="Wister J."/>
            <person name="Khouri H."/>
            <person name="Weidman J."/>
            <person name="Walsh D.A."/>
            <person name="Papke R.T."/>
            <person name="Sanchez Perez G."/>
            <person name="Sharma A.K."/>
            <person name="Nesbo C.L."/>
            <person name="MacLeod D."/>
            <person name="Bapteste E."/>
            <person name="Doolittle W.F."/>
            <person name="Charlebois R.L."/>
            <person name="Legault B."/>
            <person name="Rodriguez-Valera F."/>
        </authorList>
    </citation>
    <scope>NUCLEOTIDE SEQUENCE [LARGE SCALE GENOMIC DNA]</scope>
    <source>
        <strain>DSM 13855 / CECT 5946 / M31</strain>
    </source>
</reference>
<accession>Q2S6G1</accession>
<keyword id="KW-0067">ATP-binding</keyword>
<keyword id="KW-0963">Cytoplasm</keyword>
<keyword id="KW-0227">DNA damage</keyword>
<keyword id="KW-0234">DNA repair</keyword>
<keyword id="KW-0235">DNA replication</keyword>
<keyword id="KW-0238">DNA-binding</keyword>
<keyword id="KW-0547">Nucleotide-binding</keyword>
<keyword id="KW-1185">Reference proteome</keyword>
<keyword id="KW-0742">SOS response</keyword>
<dbReference type="EMBL" id="CP000159">
    <property type="protein sequence ID" value="ABC44337.1"/>
    <property type="molecule type" value="Genomic_DNA"/>
</dbReference>
<dbReference type="RefSeq" id="WP_011402853.1">
    <property type="nucleotide sequence ID" value="NC_007677.1"/>
</dbReference>
<dbReference type="RefSeq" id="YP_444220.1">
    <property type="nucleotide sequence ID" value="NC_007677.1"/>
</dbReference>
<dbReference type="SMR" id="Q2S6G1"/>
<dbReference type="STRING" id="309807.SRU_0067"/>
<dbReference type="EnsemblBacteria" id="ABC44337">
    <property type="protein sequence ID" value="ABC44337"/>
    <property type="gene ID" value="SRU_0067"/>
</dbReference>
<dbReference type="KEGG" id="sru:SRU_0067"/>
<dbReference type="PATRIC" id="fig|309807.25.peg.71"/>
<dbReference type="eggNOG" id="COG1195">
    <property type="taxonomic scope" value="Bacteria"/>
</dbReference>
<dbReference type="HOGENOM" id="CLU_040267_0_1_10"/>
<dbReference type="OrthoDB" id="9803889at2"/>
<dbReference type="Proteomes" id="UP000008674">
    <property type="component" value="Chromosome"/>
</dbReference>
<dbReference type="GO" id="GO:0005737">
    <property type="term" value="C:cytoplasm"/>
    <property type="evidence" value="ECO:0007669"/>
    <property type="project" value="UniProtKB-SubCell"/>
</dbReference>
<dbReference type="GO" id="GO:0005524">
    <property type="term" value="F:ATP binding"/>
    <property type="evidence" value="ECO:0007669"/>
    <property type="project" value="UniProtKB-UniRule"/>
</dbReference>
<dbReference type="GO" id="GO:0016887">
    <property type="term" value="F:ATP hydrolysis activity"/>
    <property type="evidence" value="ECO:0007669"/>
    <property type="project" value="InterPro"/>
</dbReference>
<dbReference type="GO" id="GO:0003697">
    <property type="term" value="F:single-stranded DNA binding"/>
    <property type="evidence" value="ECO:0007669"/>
    <property type="project" value="UniProtKB-UniRule"/>
</dbReference>
<dbReference type="GO" id="GO:0006260">
    <property type="term" value="P:DNA replication"/>
    <property type="evidence" value="ECO:0007669"/>
    <property type="project" value="UniProtKB-UniRule"/>
</dbReference>
<dbReference type="GO" id="GO:0000731">
    <property type="term" value="P:DNA synthesis involved in DNA repair"/>
    <property type="evidence" value="ECO:0007669"/>
    <property type="project" value="TreeGrafter"/>
</dbReference>
<dbReference type="GO" id="GO:0006302">
    <property type="term" value="P:double-strand break repair"/>
    <property type="evidence" value="ECO:0007669"/>
    <property type="project" value="TreeGrafter"/>
</dbReference>
<dbReference type="GO" id="GO:0009432">
    <property type="term" value="P:SOS response"/>
    <property type="evidence" value="ECO:0007669"/>
    <property type="project" value="UniProtKB-UniRule"/>
</dbReference>
<dbReference type="Gene3D" id="3.40.50.300">
    <property type="entry name" value="P-loop containing nucleotide triphosphate hydrolases"/>
    <property type="match status" value="1"/>
</dbReference>
<dbReference type="Gene3D" id="1.20.1050.90">
    <property type="entry name" value="RecF/RecN/SMC, N-terminal domain"/>
    <property type="match status" value="1"/>
</dbReference>
<dbReference type="HAMAP" id="MF_00365">
    <property type="entry name" value="RecF"/>
    <property type="match status" value="1"/>
</dbReference>
<dbReference type="InterPro" id="IPR003593">
    <property type="entry name" value="AAA+_ATPase"/>
</dbReference>
<dbReference type="InterPro" id="IPR001238">
    <property type="entry name" value="DNA-binding_RecF"/>
</dbReference>
<dbReference type="InterPro" id="IPR027417">
    <property type="entry name" value="P-loop_NTPase"/>
</dbReference>
<dbReference type="InterPro" id="IPR003395">
    <property type="entry name" value="RecF/RecN/SMC_N"/>
</dbReference>
<dbReference type="InterPro" id="IPR042174">
    <property type="entry name" value="RecF_2"/>
</dbReference>
<dbReference type="NCBIfam" id="TIGR00611">
    <property type="entry name" value="recf"/>
    <property type="match status" value="1"/>
</dbReference>
<dbReference type="PANTHER" id="PTHR32182">
    <property type="entry name" value="DNA REPLICATION AND REPAIR PROTEIN RECF"/>
    <property type="match status" value="1"/>
</dbReference>
<dbReference type="PANTHER" id="PTHR32182:SF0">
    <property type="entry name" value="DNA REPLICATION AND REPAIR PROTEIN RECF"/>
    <property type="match status" value="1"/>
</dbReference>
<dbReference type="Pfam" id="PF02463">
    <property type="entry name" value="SMC_N"/>
    <property type="match status" value="1"/>
</dbReference>
<dbReference type="SMART" id="SM00382">
    <property type="entry name" value="AAA"/>
    <property type="match status" value="1"/>
</dbReference>
<dbReference type="SUPFAM" id="SSF52540">
    <property type="entry name" value="P-loop containing nucleoside triphosphate hydrolases"/>
    <property type="match status" value="1"/>
</dbReference>
<gene>
    <name evidence="1" type="primary">recF</name>
    <name type="ordered locus">SRU_0067</name>
</gene>
<organism>
    <name type="scientific">Salinibacter ruber (strain DSM 13855 / M31)</name>
    <dbReference type="NCBI Taxonomy" id="309807"/>
    <lineage>
        <taxon>Bacteria</taxon>
        <taxon>Pseudomonadati</taxon>
        <taxon>Rhodothermota</taxon>
        <taxon>Rhodothermia</taxon>
        <taxon>Rhodothermales</taxon>
        <taxon>Salinibacteraceae</taxon>
        <taxon>Salinibacter</taxon>
    </lineage>
</organism>
<name>RECF_SALRD</name>
<protein>
    <recommendedName>
        <fullName evidence="1">DNA replication and repair protein RecF</fullName>
    </recommendedName>
</protein>
<sequence>MILHTLRLRSFRAHAESEFDLAPSINLLYGANGAGKTNVLEAVHYLCLTKSFTASRDRYAVRKDAPYFEIEGRIGQVREEPMTVRLAYVPGEGKSIFVNGAELDRLADIVGTLPVVVFSPEDYDLTAGGPSERRRFVNNILSQARSVYMETLMKYRRARRQRNEVLRSYKKRSAPPPDELLAPWTEKLVGLGSRIVHRRQQFLQAFADDLEEAYRRIDAVAERPTIEYDTIADLAPDATPDAIEDEFRAALARKQGQERDRGTTLVGPQRDELVFRLDDLEVRRYGSQGQHRTFAMALKLAQYFYLQQRNDTEPLLLLDDAFGKLDAERTGVFLDLLRSDAVGQSLVTATRRGPFEPALNAEPASHRALQVRPGGGTAAVTPDPEYARGEATAANGAASAPTGADAASTSRD</sequence>
<proteinExistence type="inferred from homology"/>
<evidence type="ECO:0000255" key="1">
    <source>
        <dbReference type="HAMAP-Rule" id="MF_00365"/>
    </source>
</evidence>
<evidence type="ECO:0000256" key="2">
    <source>
        <dbReference type="SAM" id="MobiDB-lite"/>
    </source>
</evidence>